<protein>
    <recommendedName>
        <fullName evidence="1">Large ribosomal subunit protein uL2</fullName>
    </recommendedName>
    <alternativeName>
        <fullName evidence="3">50S ribosomal protein L2</fullName>
    </alternativeName>
</protein>
<feature type="chain" id="PRO_1000141604" description="Large ribosomal subunit protein uL2">
    <location>
        <begin position="1"/>
        <end position="275"/>
    </location>
</feature>
<feature type="region of interest" description="Disordered" evidence="2">
    <location>
        <begin position="36"/>
        <end position="55"/>
    </location>
</feature>
<feature type="region of interest" description="Disordered" evidence="2">
    <location>
        <begin position="224"/>
        <end position="263"/>
    </location>
</feature>
<keyword id="KW-1185">Reference proteome</keyword>
<keyword id="KW-0687">Ribonucleoprotein</keyword>
<keyword id="KW-0689">Ribosomal protein</keyword>
<keyword id="KW-0694">RNA-binding</keyword>
<keyword id="KW-0699">rRNA-binding</keyword>
<organism>
    <name type="scientific">Rhodospirillum centenum (strain ATCC 51521 / SW)</name>
    <dbReference type="NCBI Taxonomy" id="414684"/>
    <lineage>
        <taxon>Bacteria</taxon>
        <taxon>Pseudomonadati</taxon>
        <taxon>Pseudomonadota</taxon>
        <taxon>Alphaproteobacteria</taxon>
        <taxon>Rhodospirillales</taxon>
        <taxon>Rhodospirillaceae</taxon>
        <taxon>Rhodospirillum</taxon>
    </lineage>
</organism>
<dbReference type="EMBL" id="CP000613">
    <property type="protein sequence ID" value="ACI98145.1"/>
    <property type="molecule type" value="Genomic_DNA"/>
</dbReference>
<dbReference type="RefSeq" id="WP_012565936.1">
    <property type="nucleotide sequence ID" value="NC_011420.2"/>
</dbReference>
<dbReference type="SMR" id="B6IRQ9"/>
<dbReference type="STRING" id="414684.RC1_0714"/>
<dbReference type="KEGG" id="rce:RC1_0714"/>
<dbReference type="eggNOG" id="COG0090">
    <property type="taxonomic scope" value="Bacteria"/>
</dbReference>
<dbReference type="HOGENOM" id="CLU_036235_2_1_5"/>
<dbReference type="OrthoDB" id="9778722at2"/>
<dbReference type="Proteomes" id="UP000001591">
    <property type="component" value="Chromosome"/>
</dbReference>
<dbReference type="GO" id="GO:0015934">
    <property type="term" value="C:large ribosomal subunit"/>
    <property type="evidence" value="ECO:0007669"/>
    <property type="project" value="InterPro"/>
</dbReference>
<dbReference type="GO" id="GO:0019843">
    <property type="term" value="F:rRNA binding"/>
    <property type="evidence" value="ECO:0007669"/>
    <property type="project" value="UniProtKB-UniRule"/>
</dbReference>
<dbReference type="GO" id="GO:0003735">
    <property type="term" value="F:structural constituent of ribosome"/>
    <property type="evidence" value="ECO:0007669"/>
    <property type="project" value="InterPro"/>
</dbReference>
<dbReference type="GO" id="GO:0016740">
    <property type="term" value="F:transferase activity"/>
    <property type="evidence" value="ECO:0007669"/>
    <property type="project" value="InterPro"/>
</dbReference>
<dbReference type="GO" id="GO:0002181">
    <property type="term" value="P:cytoplasmic translation"/>
    <property type="evidence" value="ECO:0007669"/>
    <property type="project" value="TreeGrafter"/>
</dbReference>
<dbReference type="FunFam" id="2.30.30.30:FF:000001">
    <property type="entry name" value="50S ribosomal protein L2"/>
    <property type="match status" value="1"/>
</dbReference>
<dbReference type="FunFam" id="4.10.950.10:FF:000001">
    <property type="entry name" value="50S ribosomal protein L2"/>
    <property type="match status" value="1"/>
</dbReference>
<dbReference type="Gene3D" id="2.30.30.30">
    <property type="match status" value="1"/>
</dbReference>
<dbReference type="Gene3D" id="2.40.50.140">
    <property type="entry name" value="Nucleic acid-binding proteins"/>
    <property type="match status" value="1"/>
</dbReference>
<dbReference type="Gene3D" id="4.10.950.10">
    <property type="entry name" value="Ribosomal protein L2, domain 3"/>
    <property type="match status" value="1"/>
</dbReference>
<dbReference type="HAMAP" id="MF_01320_B">
    <property type="entry name" value="Ribosomal_uL2_B"/>
    <property type="match status" value="1"/>
</dbReference>
<dbReference type="InterPro" id="IPR012340">
    <property type="entry name" value="NA-bd_OB-fold"/>
</dbReference>
<dbReference type="InterPro" id="IPR014722">
    <property type="entry name" value="Rib_uL2_dom2"/>
</dbReference>
<dbReference type="InterPro" id="IPR002171">
    <property type="entry name" value="Ribosomal_uL2"/>
</dbReference>
<dbReference type="InterPro" id="IPR005880">
    <property type="entry name" value="Ribosomal_uL2_bac/org-type"/>
</dbReference>
<dbReference type="InterPro" id="IPR022669">
    <property type="entry name" value="Ribosomal_uL2_C"/>
</dbReference>
<dbReference type="InterPro" id="IPR022671">
    <property type="entry name" value="Ribosomal_uL2_CS"/>
</dbReference>
<dbReference type="InterPro" id="IPR014726">
    <property type="entry name" value="Ribosomal_uL2_dom3"/>
</dbReference>
<dbReference type="InterPro" id="IPR022666">
    <property type="entry name" value="Ribosomal_uL2_RNA-bd_dom"/>
</dbReference>
<dbReference type="InterPro" id="IPR008991">
    <property type="entry name" value="Translation_prot_SH3-like_sf"/>
</dbReference>
<dbReference type="NCBIfam" id="TIGR01171">
    <property type="entry name" value="rplB_bact"/>
    <property type="match status" value="1"/>
</dbReference>
<dbReference type="PANTHER" id="PTHR13691:SF5">
    <property type="entry name" value="LARGE RIBOSOMAL SUBUNIT PROTEIN UL2M"/>
    <property type="match status" value="1"/>
</dbReference>
<dbReference type="PANTHER" id="PTHR13691">
    <property type="entry name" value="RIBOSOMAL PROTEIN L2"/>
    <property type="match status" value="1"/>
</dbReference>
<dbReference type="Pfam" id="PF00181">
    <property type="entry name" value="Ribosomal_L2"/>
    <property type="match status" value="1"/>
</dbReference>
<dbReference type="Pfam" id="PF03947">
    <property type="entry name" value="Ribosomal_L2_C"/>
    <property type="match status" value="1"/>
</dbReference>
<dbReference type="PIRSF" id="PIRSF002158">
    <property type="entry name" value="Ribosomal_L2"/>
    <property type="match status" value="1"/>
</dbReference>
<dbReference type="SMART" id="SM01383">
    <property type="entry name" value="Ribosomal_L2"/>
    <property type="match status" value="1"/>
</dbReference>
<dbReference type="SMART" id="SM01382">
    <property type="entry name" value="Ribosomal_L2_C"/>
    <property type="match status" value="1"/>
</dbReference>
<dbReference type="SUPFAM" id="SSF50249">
    <property type="entry name" value="Nucleic acid-binding proteins"/>
    <property type="match status" value="1"/>
</dbReference>
<dbReference type="SUPFAM" id="SSF50104">
    <property type="entry name" value="Translation proteins SH3-like domain"/>
    <property type="match status" value="1"/>
</dbReference>
<dbReference type="PROSITE" id="PS00467">
    <property type="entry name" value="RIBOSOMAL_L2"/>
    <property type="match status" value="1"/>
</dbReference>
<name>RL2_RHOCS</name>
<proteinExistence type="inferred from homology"/>
<gene>
    <name evidence="1" type="primary">rplB</name>
    <name type="ordered locus">RC1_0714</name>
</gene>
<accession>B6IRQ9</accession>
<comment type="function">
    <text evidence="1">One of the primary rRNA binding proteins. Required for association of the 30S and 50S subunits to form the 70S ribosome, for tRNA binding and peptide bond formation. It has been suggested to have peptidyltransferase activity; this is somewhat controversial. Makes several contacts with the 16S rRNA in the 70S ribosome.</text>
</comment>
<comment type="subunit">
    <text evidence="1">Part of the 50S ribosomal subunit. Forms a bridge to the 30S subunit in the 70S ribosome.</text>
</comment>
<comment type="similarity">
    <text evidence="1">Belongs to the universal ribosomal protein uL2 family.</text>
</comment>
<sequence length="275" mass="30175">MALKTFRPITPSLRQLVLVDRSELWKGKPVKALTEGLTGSGGRNNTGRITARRMGGGHKRRYRLVDFKRRMKPDMPATVERLEYDPNRTAFIALIRYTDGTLAYILAPQRLKAGDTVVSGEKVDVKPGNAMPLRNIPVGTIVHNVELKPGKGGQLARAAGTYLQLVGRDQGYAQLKLPSGELRVVRGECFATIGAVSNPDQANVVIGKAGRNRWLGRRPSVRGVVMNPIDHPHGGGEGRTSGGRHPVTPWGKPTKGKKTRQNKATDKFIIRRRAK</sequence>
<reference key="1">
    <citation type="submission" date="2007-03" db="EMBL/GenBank/DDBJ databases">
        <title>Genome sequence of Rhodospirillum centenum.</title>
        <authorList>
            <person name="Touchman J.W."/>
            <person name="Bauer C."/>
            <person name="Blankenship R.E."/>
        </authorList>
    </citation>
    <scope>NUCLEOTIDE SEQUENCE [LARGE SCALE GENOMIC DNA]</scope>
    <source>
        <strain>ATCC 51521 / SW</strain>
    </source>
</reference>
<evidence type="ECO:0000255" key="1">
    <source>
        <dbReference type="HAMAP-Rule" id="MF_01320"/>
    </source>
</evidence>
<evidence type="ECO:0000256" key="2">
    <source>
        <dbReference type="SAM" id="MobiDB-lite"/>
    </source>
</evidence>
<evidence type="ECO:0000305" key="3"/>